<keyword id="KW-0229">DNA integration</keyword>
<keyword id="KW-0233">DNA recombination</keyword>
<keyword id="KW-0238">DNA-binding</keyword>
<keyword id="KW-0255">Endonuclease</keyword>
<keyword id="KW-0895">ERV</keyword>
<keyword id="KW-0378">Hydrolase</keyword>
<keyword id="KW-0479">Metal-binding</keyword>
<keyword id="KW-0511">Multifunctional enzyme</keyword>
<keyword id="KW-0540">Nuclease</keyword>
<keyword id="KW-0548">Nucleotidyltransferase</keyword>
<keyword id="KW-1185">Reference proteome</keyword>
<keyword id="KW-0695">RNA-directed DNA polymerase</keyword>
<keyword id="KW-0808">Transferase</keyword>
<keyword id="KW-0814">Transposable element</keyword>
<keyword id="KW-0862">Zinc</keyword>
<keyword id="KW-0863">Zinc-finger</keyword>
<sequence>NKSRKRRNRVSFLGAVTVEPPKPIPLTWKTEKPVWVNQWPLPKQKLEALHLLANEQLEKGHIEPSFSPWNSPVFVIQKKSGKWHTLTDLRAVNAVIQPMGPLQPGLPSPAMIPKDWPLIIIDLKDCFFTIPLAEQDCEKFAFTIPAINNKEPATRFQWKVLPQGMLNSPTICQTFVGRALQPVREKFSDCYIIHYIDDILCAAETKDKLIDCYTFLQAEVANAGLAIASDKIQTSTPFHYLGMQIENRKIKPQKIEIRKDTLKTLNDFQKLLGDINWIRPTLGIPTYAMSNLFSILRGDSDLNSQRILTPEATKEIKLVEEKIQSAQINRIDPLAPLQLLIFATAHSPTGIIIQNTDLVEWSFLPHSTVKTFTLYLDQIATLIGQTRLRITKLCGNDPDKIVVPLTKEQVRQAFINSGAWQIGLANFVGLIDNHYPKTKIFQFLKLTTWILPKITRREPLENALTVFTDGSSNGKAAYTGPKERVIKTPYQSAQRDELVAVITVLQDFDQPINIISDSAYVVQATRDVETALIKYSMDDQLNQLFNLLQQTVRKRNFPFYITYIRAHTNLPGPLTKANEQADLLVSSALIKAQELHALTHVNAAGLKNKFDVTWKQAKDIVQHCTQCQVLHLPTQEAGVNPRGLCPNALWQMDVTHVPSFGRLSYVHVTVDTYSHFIWATCQTGESTSHVKKHLLSCFAVMGVPEKIKTDNGPGYCSKAFQKFLSQWKISHTTGIPYNSQGQAIVERTNRTLKTQLVKQKEGGDSKECTTPQMQLNLALYTLNFLNIYRNQTTTSAEQHLTGKKNSPHEGKLIWWKDNKNKTWEIGKVITWGRGFACVSPGENQLPVWLPTRHLKFYNEPIGDAKKRASTEMVTPVTWMDNPIEVYVNDSIWVPGPIDDRCPAKPEEEGMMINISIGYRYPPICLGRAPGCLMPAVQNWLVEVPTVSPISRFTYHMVSGMSLRPRVNYLQDFSYQRSLKFRPKGKPCPKEIPKESKNTEVLVWEECVANSAVIL</sequence>
<reference key="1">
    <citation type="journal article" date="2004" name="Nature">
        <title>The DNA sequence and comparative analysis of human chromosome 5.</title>
        <authorList>
            <person name="Schmutz J."/>
            <person name="Martin J."/>
            <person name="Terry A."/>
            <person name="Couronne O."/>
            <person name="Grimwood J."/>
            <person name="Lowry S."/>
            <person name="Gordon L.A."/>
            <person name="Scott D."/>
            <person name="Xie G."/>
            <person name="Huang W."/>
            <person name="Hellsten U."/>
            <person name="Tran-Gyamfi M."/>
            <person name="She X."/>
            <person name="Prabhakar S."/>
            <person name="Aerts A."/>
            <person name="Altherr M."/>
            <person name="Bajorek E."/>
            <person name="Black S."/>
            <person name="Branscomb E."/>
            <person name="Caoile C."/>
            <person name="Challacombe J.F."/>
            <person name="Chan Y.M."/>
            <person name="Denys M."/>
            <person name="Detter J.C."/>
            <person name="Escobar J."/>
            <person name="Flowers D."/>
            <person name="Fotopulos D."/>
            <person name="Glavina T."/>
            <person name="Gomez M."/>
            <person name="Gonzales E."/>
            <person name="Goodstein D."/>
            <person name="Grigoriev I."/>
            <person name="Groza M."/>
            <person name="Hammon N."/>
            <person name="Hawkins T."/>
            <person name="Haydu L."/>
            <person name="Israni S."/>
            <person name="Jett J."/>
            <person name="Kadner K."/>
            <person name="Kimball H."/>
            <person name="Kobayashi A."/>
            <person name="Lopez F."/>
            <person name="Lou Y."/>
            <person name="Martinez D."/>
            <person name="Medina C."/>
            <person name="Morgan J."/>
            <person name="Nandkeshwar R."/>
            <person name="Noonan J.P."/>
            <person name="Pitluck S."/>
            <person name="Pollard M."/>
            <person name="Predki P."/>
            <person name="Priest J."/>
            <person name="Ramirez L."/>
            <person name="Retterer J."/>
            <person name="Rodriguez A."/>
            <person name="Rogers S."/>
            <person name="Salamov A."/>
            <person name="Salazar A."/>
            <person name="Thayer N."/>
            <person name="Tice H."/>
            <person name="Tsai M."/>
            <person name="Ustaszewska A."/>
            <person name="Vo N."/>
            <person name="Wheeler J."/>
            <person name="Wu K."/>
            <person name="Yang J."/>
            <person name="Dickson M."/>
            <person name="Cheng J.-F."/>
            <person name="Eichler E.E."/>
            <person name="Olsen A."/>
            <person name="Pennacchio L.A."/>
            <person name="Rokhsar D.S."/>
            <person name="Richardson P."/>
            <person name="Lucas S.M."/>
            <person name="Myers R.M."/>
            <person name="Rubin E.M."/>
        </authorList>
    </citation>
    <scope>NUCLEOTIDE SEQUENCE [LARGE SCALE GENOMIC DNA]</scope>
</reference>
<reference key="2">
    <citation type="journal article" date="1986" name="J. Virol.">
        <title>Nucleotide sequence of human endogenous retrovirus genome related to the mouse mammary tumor virus genome.</title>
        <authorList>
            <person name="Ono M."/>
            <person name="Yasunaga T."/>
            <person name="Miyata T."/>
            <person name="Ushikubo H."/>
        </authorList>
    </citation>
    <scope>NUCLEOTIDE SEQUENCE [GENOMIC DNA] OF 1-740</scope>
</reference>
<reference key="3">
    <citation type="journal article" date="1997" name="Virology">
        <title>Characterization of human endogenous retrovirus type K (HERV-K) virus-like particles generated from recombinant baculoviruses.</title>
        <authorList>
            <person name="Toenjes R.R."/>
            <person name="Boller K."/>
            <person name="Limbach R."/>
            <person name="Lugert R."/>
            <person name="Kurth R."/>
        </authorList>
    </citation>
    <scope>NUCLEOTIDE SEQUENCE [GENOMIC DNA] OF 1-740</scope>
</reference>
<reference key="4">
    <citation type="journal article" date="1999" name="Curr. Biol.">
        <title>Many human endogenous retrovirus K (HERV-K) proviruses are unique to humans.</title>
        <authorList>
            <person name="Barbulescu M."/>
            <person name="Turner G."/>
            <person name="Seaman M.I."/>
            <person name="Deinard A.S."/>
            <person name="Kidd K.K."/>
            <person name="Lenz J."/>
        </authorList>
    </citation>
    <scope>NUCLEOTIDE SEQUENCE [GENOMIC DNA] OF 1-830</scope>
</reference>
<organism>
    <name type="scientific">Homo sapiens</name>
    <name type="common">Human</name>
    <dbReference type="NCBI Taxonomy" id="9606"/>
    <lineage>
        <taxon>Eukaryota</taxon>
        <taxon>Metazoa</taxon>
        <taxon>Chordata</taxon>
        <taxon>Craniata</taxon>
        <taxon>Vertebrata</taxon>
        <taxon>Euteleostomi</taxon>
        <taxon>Mammalia</taxon>
        <taxon>Eutheria</taxon>
        <taxon>Euarchontoglires</taxon>
        <taxon>Primates</taxon>
        <taxon>Haplorrhini</taxon>
        <taxon>Catarrhini</taxon>
        <taxon>Hominidae</taxon>
        <taxon>Homo</taxon>
    </lineage>
</organism>
<feature type="chain" id="PRO_0000186769" description="Endogenous retrovirus group K member 10 Pol protein">
    <location>
        <begin position="1"/>
        <end position="1014"/>
    </location>
</feature>
<feature type="domain" description="Reverse transcriptase" evidence="1">
    <location>
        <begin position="57"/>
        <end position="245"/>
    </location>
</feature>
<feature type="domain" description="RNase H type-1" evidence="2">
    <location>
        <begin position="460"/>
        <end position="590"/>
    </location>
</feature>
<feature type="domain" description="Integrase catalytic" evidence="4">
    <location>
        <begin position="642"/>
        <end position="803"/>
    </location>
</feature>
<feature type="zinc finger region" description="Integrase-type" evidence="3">
    <location>
        <begin position="587"/>
        <end position="628"/>
    </location>
</feature>
<feature type="DNA-binding region" description="Integrase-type" evidence="5">
    <location>
        <begin position="811"/>
        <end position="859"/>
    </location>
</feature>
<feature type="short sequence motif" description="LPQG">
    <location>
        <begin position="161"/>
        <end position="164"/>
    </location>
</feature>
<feature type="short sequence motif" description="YXDD">
    <location>
        <begin position="195"/>
        <end position="198"/>
    </location>
</feature>
<feature type="binding site" evidence="2">
    <location>
        <position position="469"/>
    </location>
    <ligand>
        <name>Mg(2+)</name>
        <dbReference type="ChEBI" id="CHEBI:18420"/>
        <label>1</label>
    </ligand>
</feature>
<feature type="binding site" evidence="2">
    <location>
        <position position="469"/>
    </location>
    <ligand>
        <name>Mg(2+)</name>
        <dbReference type="ChEBI" id="CHEBI:18420"/>
        <label>2</label>
    </ligand>
</feature>
<feature type="binding site" evidence="2">
    <location>
        <position position="497"/>
    </location>
    <ligand>
        <name>Mg(2+)</name>
        <dbReference type="ChEBI" id="CHEBI:18420"/>
        <label>1</label>
    </ligand>
</feature>
<feature type="binding site" evidence="2">
    <location>
        <position position="517"/>
    </location>
    <ligand>
        <name>Mg(2+)</name>
        <dbReference type="ChEBI" id="CHEBI:18420"/>
        <label>1</label>
    </ligand>
</feature>
<feature type="binding site" evidence="2">
    <location>
        <position position="582"/>
    </location>
    <ligand>
        <name>Mg(2+)</name>
        <dbReference type="ChEBI" id="CHEBI:18420"/>
        <label>2</label>
    </ligand>
</feature>
<feature type="binding site" evidence="3">
    <location>
        <position position="596"/>
    </location>
    <ligand>
        <name>Zn(2+)</name>
        <dbReference type="ChEBI" id="CHEBI:29105"/>
    </ligand>
</feature>
<feature type="binding site" evidence="3">
    <location>
        <position position="600"/>
    </location>
    <ligand>
        <name>Zn(2+)</name>
        <dbReference type="ChEBI" id="CHEBI:29105"/>
    </ligand>
</feature>
<feature type="binding site" evidence="3">
    <location>
        <position position="624"/>
    </location>
    <ligand>
        <name>Zn(2+)</name>
        <dbReference type="ChEBI" id="CHEBI:29105"/>
    </ligand>
</feature>
<feature type="binding site" evidence="3">
    <location>
        <position position="627"/>
    </location>
    <ligand>
        <name>Zn(2+)</name>
        <dbReference type="ChEBI" id="CHEBI:29105"/>
    </ligand>
</feature>
<feature type="sequence conflict" description="In Ref. 2." evidence="6" ref="2">
    <original>N</original>
    <variation>M</variation>
    <location>
        <position position="1"/>
    </location>
</feature>
<feature type="sequence conflict" description="In Ref. 3 and 4." evidence="6" ref="3 4">
    <original>D</original>
    <variation>A</variation>
    <location>
        <position position="496"/>
    </location>
</feature>
<feature type="sequence conflict" description="In Ref. 4; AAD51796." evidence="6" ref="4">
    <original>Y</original>
    <variation>H</variation>
    <location>
        <position position="563"/>
    </location>
</feature>
<feature type="sequence conflict" description="In Ref. 4." evidence="6" ref="4">
    <original>S</original>
    <variation>SYS</variation>
    <location>
        <position position="674"/>
    </location>
</feature>
<evidence type="ECO:0000255" key="1">
    <source>
        <dbReference type="PROSITE-ProRule" id="PRU00405"/>
    </source>
</evidence>
<evidence type="ECO:0000255" key="2">
    <source>
        <dbReference type="PROSITE-ProRule" id="PRU00408"/>
    </source>
</evidence>
<evidence type="ECO:0000255" key="3">
    <source>
        <dbReference type="PROSITE-ProRule" id="PRU00450"/>
    </source>
</evidence>
<evidence type="ECO:0000255" key="4">
    <source>
        <dbReference type="PROSITE-ProRule" id="PRU00457"/>
    </source>
</evidence>
<evidence type="ECO:0000255" key="5">
    <source>
        <dbReference type="PROSITE-ProRule" id="PRU00506"/>
    </source>
</evidence>
<evidence type="ECO:0000305" key="6"/>
<dbReference type="EC" id="2.7.7.49"/>
<dbReference type="EC" id="3.1.26.4"/>
<dbReference type="EMBL" id="AC016577">
    <property type="status" value="NOT_ANNOTATED_CDS"/>
    <property type="molecule type" value="Genomic_DNA"/>
</dbReference>
<dbReference type="EMBL" id="M14123">
    <property type="protein sequence ID" value="AAA88033.1"/>
    <property type="status" value="ALT_SEQ"/>
    <property type="molecule type" value="Genomic_DNA"/>
</dbReference>
<dbReference type="EMBL" id="Y10391">
    <property type="protein sequence ID" value="CAA71417.1"/>
    <property type="molecule type" value="Genomic_DNA"/>
</dbReference>
<dbReference type="EMBL" id="AF164613">
    <property type="protein sequence ID" value="AAD51796.1"/>
    <property type="status" value="ALT_SEQ"/>
    <property type="molecule type" value="Genomic_DNA"/>
</dbReference>
<dbReference type="PIR" id="D24483">
    <property type="entry name" value="GNHUER"/>
</dbReference>
<dbReference type="SMR" id="P10266"/>
<dbReference type="FunCoup" id="P10266">
    <property type="interactions" value="29"/>
</dbReference>
<dbReference type="IntAct" id="P10266">
    <property type="interactions" value="1"/>
</dbReference>
<dbReference type="GlyGen" id="P10266">
    <property type="glycosylation" value="1 site, 1 N-linked glycan (1 site)"/>
</dbReference>
<dbReference type="BioMuta" id="HGNC:39004"/>
<dbReference type="MassIVE" id="P10266"/>
<dbReference type="PeptideAtlas" id="P10266"/>
<dbReference type="GeneCards" id="ERVK-10"/>
<dbReference type="HGNC" id="HGNC:39004">
    <property type="gene designation" value="ERVK-10"/>
</dbReference>
<dbReference type="neXtProt" id="NX_P10266"/>
<dbReference type="InParanoid" id="P10266"/>
<dbReference type="PAN-GO" id="P10266">
    <property type="GO annotations" value="1 GO annotation based on evolutionary models"/>
</dbReference>
<dbReference type="PhylomeDB" id="P10266"/>
<dbReference type="PathwayCommons" id="P10266"/>
<dbReference type="SignaLink" id="P10266"/>
<dbReference type="Pharos" id="P10266">
    <property type="development level" value="Tdark"/>
</dbReference>
<dbReference type="Proteomes" id="UP000005640">
    <property type="component" value="Unplaced"/>
</dbReference>
<dbReference type="RNAct" id="P10266">
    <property type="molecule type" value="protein"/>
</dbReference>
<dbReference type="GO" id="GO:0003677">
    <property type="term" value="F:DNA binding"/>
    <property type="evidence" value="ECO:0007669"/>
    <property type="project" value="UniProtKB-KW"/>
</dbReference>
<dbReference type="GO" id="GO:0035613">
    <property type="term" value="F:RNA stem-loop binding"/>
    <property type="evidence" value="ECO:0000318"/>
    <property type="project" value="GO_Central"/>
</dbReference>
<dbReference type="GO" id="GO:0003964">
    <property type="term" value="F:RNA-directed DNA polymerase activity"/>
    <property type="evidence" value="ECO:0007669"/>
    <property type="project" value="UniProtKB-KW"/>
</dbReference>
<dbReference type="GO" id="GO:0004523">
    <property type="term" value="F:RNA-DNA hybrid ribonuclease activity"/>
    <property type="evidence" value="ECO:0007669"/>
    <property type="project" value="UniProtKB-EC"/>
</dbReference>
<dbReference type="GO" id="GO:0008270">
    <property type="term" value="F:zinc ion binding"/>
    <property type="evidence" value="ECO:0007669"/>
    <property type="project" value="UniProtKB-KW"/>
</dbReference>
<dbReference type="GO" id="GO:0015074">
    <property type="term" value="P:DNA integration"/>
    <property type="evidence" value="ECO:0007669"/>
    <property type="project" value="UniProtKB-KW"/>
</dbReference>
<dbReference type="GO" id="GO:0006310">
    <property type="term" value="P:DNA recombination"/>
    <property type="evidence" value="ECO:0007669"/>
    <property type="project" value="UniProtKB-KW"/>
</dbReference>
<dbReference type="GO" id="GO:0000731">
    <property type="term" value="P:DNA synthesis involved in DNA repair"/>
    <property type="evidence" value="ECO:0007669"/>
    <property type="project" value="UniProtKB-ARBA"/>
</dbReference>
<dbReference type="GO" id="GO:0006261">
    <property type="term" value="P:DNA-templated DNA replication"/>
    <property type="evidence" value="ECO:0007669"/>
    <property type="project" value="UniProtKB-ARBA"/>
</dbReference>
<dbReference type="CDD" id="cd09273">
    <property type="entry name" value="RNase_HI_RT_Bel"/>
    <property type="match status" value="1"/>
</dbReference>
<dbReference type="CDD" id="cd01645">
    <property type="entry name" value="RT_Rtv"/>
    <property type="match status" value="1"/>
</dbReference>
<dbReference type="FunFam" id="3.30.70.270:FF:000085">
    <property type="entry name" value="Endogenous retrovirus group K member 10 Pol protein"/>
    <property type="match status" value="1"/>
</dbReference>
<dbReference type="FunFam" id="3.30.420.10:FF:000145">
    <property type="entry name" value="Endogenous retrovirus group K member 18 Pol protein"/>
    <property type="match status" value="1"/>
</dbReference>
<dbReference type="FunFam" id="3.30.420.10:FF:000146">
    <property type="entry name" value="Endogenous retrovirus group K member 6 Pol protein"/>
    <property type="match status" value="1"/>
</dbReference>
<dbReference type="Gene3D" id="1.10.10.200">
    <property type="match status" value="1"/>
</dbReference>
<dbReference type="Gene3D" id="3.30.70.270">
    <property type="match status" value="2"/>
</dbReference>
<dbReference type="Gene3D" id="3.10.10.10">
    <property type="entry name" value="HIV Type 1 Reverse Transcriptase, subunit A, domain 1"/>
    <property type="match status" value="1"/>
</dbReference>
<dbReference type="Gene3D" id="2.30.30.10">
    <property type="entry name" value="Integrase, C-terminal domain superfamily, retroviral"/>
    <property type="match status" value="1"/>
</dbReference>
<dbReference type="Gene3D" id="3.30.420.10">
    <property type="entry name" value="Ribonuclease H-like superfamily/Ribonuclease H"/>
    <property type="match status" value="2"/>
</dbReference>
<dbReference type="InterPro" id="IPR043502">
    <property type="entry name" value="DNA/RNA_pol_sf"/>
</dbReference>
<dbReference type="InterPro" id="IPR029104">
    <property type="entry name" value="HERV-K_env"/>
</dbReference>
<dbReference type="InterPro" id="IPR017856">
    <property type="entry name" value="Integrase-like_N"/>
</dbReference>
<dbReference type="InterPro" id="IPR036862">
    <property type="entry name" value="Integrase_C_dom_sf_retrovir"/>
</dbReference>
<dbReference type="InterPro" id="IPR001037">
    <property type="entry name" value="Integrase_C_retrovir"/>
</dbReference>
<dbReference type="InterPro" id="IPR001584">
    <property type="entry name" value="Integrase_cat-core"/>
</dbReference>
<dbReference type="InterPro" id="IPR003308">
    <property type="entry name" value="Integrase_Zn-bd_dom_N"/>
</dbReference>
<dbReference type="InterPro" id="IPR043128">
    <property type="entry name" value="Rev_trsase/Diguanyl_cyclase"/>
</dbReference>
<dbReference type="InterPro" id="IPR012337">
    <property type="entry name" value="RNaseH-like_sf"/>
</dbReference>
<dbReference type="InterPro" id="IPR002156">
    <property type="entry name" value="RNaseH_domain"/>
</dbReference>
<dbReference type="InterPro" id="IPR036397">
    <property type="entry name" value="RNaseH_sf"/>
</dbReference>
<dbReference type="InterPro" id="IPR000477">
    <property type="entry name" value="RT_dom"/>
</dbReference>
<dbReference type="InterPro" id="IPR010661">
    <property type="entry name" value="RVT_thumb"/>
</dbReference>
<dbReference type="PANTHER" id="PTHR41694:SF4">
    <property type="entry name" value="ENDOGENOUS RETROVIRUS GROUP K MEMBER 10 POL PROTEIN-RELATED"/>
    <property type="match status" value="1"/>
</dbReference>
<dbReference type="PANTHER" id="PTHR41694">
    <property type="entry name" value="ENDOGENOUS RETROVIRUS GROUP K MEMBER POL PROTEIN"/>
    <property type="match status" value="1"/>
</dbReference>
<dbReference type="Pfam" id="PF13804">
    <property type="entry name" value="HERV-K_env_2"/>
    <property type="match status" value="1"/>
</dbReference>
<dbReference type="Pfam" id="PF00552">
    <property type="entry name" value="IN_DBD_C"/>
    <property type="match status" value="1"/>
</dbReference>
<dbReference type="Pfam" id="PF02022">
    <property type="entry name" value="Integrase_Zn"/>
    <property type="match status" value="1"/>
</dbReference>
<dbReference type="Pfam" id="PF00075">
    <property type="entry name" value="RNase_H"/>
    <property type="match status" value="1"/>
</dbReference>
<dbReference type="Pfam" id="PF00665">
    <property type="entry name" value="rve"/>
    <property type="match status" value="1"/>
</dbReference>
<dbReference type="Pfam" id="PF00078">
    <property type="entry name" value="RVT_1"/>
    <property type="match status" value="1"/>
</dbReference>
<dbReference type="Pfam" id="PF06817">
    <property type="entry name" value="RVT_thumb"/>
    <property type="match status" value="1"/>
</dbReference>
<dbReference type="SUPFAM" id="SSF50122">
    <property type="entry name" value="DNA-binding domain of retroviral integrase"/>
    <property type="match status" value="1"/>
</dbReference>
<dbReference type="SUPFAM" id="SSF56672">
    <property type="entry name" value="DNA/RNA polymerases"/>
    <property type="match status" value="1"/>
</dbReference>
<dbReference type="SUPFAM" id="SSF46919">
    <property type="entry name" value="N-terminal Zn binding domain of HIV integrase"/>
    <property type="match status" value="1"/>
</dbReference>
<dbReference type="SUPFAM" id="SSF53098">
    <property type="entry name" value="Ribonuclease H-like"/>
    <property type="match status" value="2"/>
</dbReference>
<dbReference type="PROSITE" id="PS50994">
    <property type="entry name" value="INTEGRASE"/>
    <property type="match status" value="1"/>
</dbReference>
<dbReference type="PROSITE" id="PS51027">
    <property type="entry name" value="INTEGRASE_DBD"/>
    <property type="match status" value="1"/>
</dbReference>
<dbReference type="PROSITE" id="PS50879">
    <property type="entry name" value="RNASE_H_1"/>
    <property type="match status" value="1"/>
</dbReference>
<dbReference type="PROSITE" id="PS50878">
    <property type="entry name" value="RT_POL"/>
    <property type="match status" value="1"/>
</dbReference>
<dbReference type="PROSITE" id="PS50876">
    <property type="entry name" value="ZF_INTEGRASE"/>
    <property type="match status" value="1"/>
</dbReference>
<name>POK10_HUMAN</name>
<proteinExistence type="inferred from homology"/>
<accession>P10266</accession>
<accession>P87890</accession>
<accession>Q14273</accession>
<protein>
    <recommendedName>
        <fullName>Endogenous retrovirus group K member 10 Pol protein</fullName>
    </recommendedName>
    <alternativeName>
        <fullName>HERV-K10 Pol protein</fullName>
    </alternativeName>
    <alternativeName>
        <fullName>HERV-K107 Pol protein</fullName>
    </alternativeName>
    <alternativeName>
        <fullName>HERV-K_5q33.3 provirus ancestral Pol protein</fullName>
    </alternativeName>
    <domain>
        <recommendedName>
            <fullName>Reverse transcriptase</fullName>
            <shortName>RT</shortName>
            <ecNumber>2.7.7.49</ecNumber>
        </recommendedName>
    </domain>
    <domain>
        <recommendedName>
            <fullName>Ribonuclease H</fullName>
            <shortName>RNase H</shortName>
            <ecNumber>3.1.26.4</ecNumber>
        </recommendedName>
    </domain>
    <domain>
        <recommendedName>
            <fullName>Integrase</fullName>
            <shortName>IN</shortName>
        </recommendedName>
    </domain>
</protein>
<gene>
    <name type="primary">ERVK-10</name>
</gene>
<comment type="function">
    <text>Early post-infection, the reverse transcriptase converts the viral RNA genome into double-stranded viral DNA. The RNase H domain of the reverse transcriptase performs two functions. It degrades the RNA template and specifically removes the RNA primer from the RNA/DNA hybrid. Following nuclear import, the integrase catalyzes the insertion of the linear, double-stranded viral DNA into the host cell chromosome. Endogenous Pol proteins may have kept, lost or modified their original function during evolution.</text>
</comment>
<comment type="catalytic activity">
    <reaction evidence="1">
        <text>DNA(n) + a 2'-deoxyribonucleoside 5'-triphosphate = DNA(n+1) + diphosphate</text>
        <dbReference type="Rhea" id="RHEA:22508"/>
        <dbReference type="Rhea" id="RHEA-COMP:17339"/>
        <dbReference type="Rhea" id="RHEA-COMP:17340"/>
        <dbReference type="ChEBI" id="CHEBI:33019"/>
        <dbReference type="ChEBI" id="CHEBI:61560"/>
        <dbReference type="ChEBI" id="CHEBI:173112"/>
        <dbReference type="EC" id="2.7.7.49"/>
    </reaction>
</comment>
<comment type="catalytic activity">
    <reaction evidence="2">
        <text>Endonucleolytic cleavage to 5'-phosphomonoester.</text>
        <dbReference type="EC" id="3.1.26.4"/>
    </reaction>
</comment>
<comment type="domain">
    <text>The LPQG and YXDD motifs are catalytically important and conserved among many retroviruses.</text>
</comment>
<comment type="miscellaneous">
    <text>This protein is synthesized as Gag-Pro and Gag-Pro-Pol polyprotein precursors. These polyproteins are thought, by similarity with type-B retroviruses, to be generated by -1 frameshifts occurring at the Gag-Pro and Pro-Pol genes boundaries.</text>
</comment>
<comment type="miscellaneous">
    <text>Has a type 1 genome. The HERV-K(HML-2) family contains type 1 and type 2 genomes depending on the absence or presence of 292 nucleotides at the 5'-end of the env gene. Type 1 genomes lack a pol stop codon, leading to expression of a fusion protein containing a portion of the Env sequence.</text>
</comment>
<comment type="miscellaneous">
    <text>Exact N-terminus of this protein has not been formally described.</text>
</comment>
<comment type="similarity">
    <text evidence="6">Belongs to the beta type-B retroviral polymerase family. HERV class-II K(HML-2) pol subfamily.</text>
</comment>
<comment type="sequence caution" evidence="6">
    <conflict type="frameshift">
        <sequence resource="EMBL-CDS" id="AAD51796"/>
    </conflict>
    <text>A -1 frameshift presumed to occur at the N-terminus at the Pro-Pol gene boundary.</text>
</comment>